<reference key="1">
    <citation type="journal article" date="1994" name="FEMS Microbiol. Lett.">
        <title>The nusG gene of Streptomyces griseus: cloning of the gene and analysis of the A-factor binding properties of the gene product.</title>
        <authorList>
            <person name="Kuberski S."/>
            <person name="Kasberg T."/>
            <person name="Distler J."/>
        </authorList>
    </citation>
    <scope>NUCLEOTIDE SEQUENCE [GENOMIC DNA]</scope>
    <source>
        <strain>N2-3-11</strain>
    </source>
</reference>
<reference key="2">
    <citation type="journal article" date="1982" name="Biochim. Biophys. Acta">
        <title>The primary structure of an acidic ribosomal protein from Streptomyces griseus.</title>
        <authorList>
            <person name="Itoh T."/>
            <person name="Sugiyama M."/>
            <person name="Higo K."/>
        </authorList>
    </citation>
    <scope>PROTEIN SEQUENCE OF 2-127</scope>
</reference>
<protein>
    <recommendedName>
        <fullName evidence="1">Large ribosomal subunit protein bL12</fullName>
    </recommendedName>
    <alternativeName>
        <fullName evidence="3">50S ribosomal protein L7/L12</fullName>
        <shortName>SA1</shortName>
    </alternativeName>
</protein>
<organism>
    <name type="scientific">Streptomyces griseus</name>
    <dbReference type="NCBI Taxonomy" id="1911"/>
    <lineage>
        <taxon>Bacteria</taxon>
        <taxon>Bacillati</taxon>
        <taxon>Actinomycetota</taxon>
        <taxon>Actinomycetes</taxon>
        <taxon>Kitasatosporales</taxon>
        <taxon>Streptomycetaceae</taxon>
        <taxon>Streptomyces</taxon>
    </lineage>
</organism>
<gene>
    <name evidence="1" type="primary">rplL</name>
</gene>
<accession>P02396</accession>
<accession>P36259</accession>
<comment type="function">
    <text evidence="1">Forms part of the ribosomal stalk which helps the ribosome interact with GTP-bound translation factors. Is thus essential for accurate translation.</text>
</comment>
<comment type="subunit">
    <text evidence="1">Homodimer. Part of the ribosomal stalk of the 50S ribosomal subunit. Forms a multimeric L10(L12)X complex, where L10 forms an elongated spine to which 2 to 4 L12 dimers bind in a sequential fashion. Binds GTP-bound translation factors.</text>
</comment>
<comment type="similarity">
    <text evidence="1">Belongs to the bacterial ribosomal protein bL12 family.</text>
</comment>
<feature type="initiator methionine" description="Removed" evidence="2">
    <location>
        <position position="1"/>
    </location>
</feature>
<feature type="chain" id="PRO_0000157587" description="Large ribosomal subunit protein bL12">
    <location>
        <begin position="2"/>
        <end position="127"/>
    </location>
</feature>
<feature type="sequence conflict" description="In Ref. 2; AA sequence." evidence="3" ref="2">
    <location>
        <position position="54"/>
    </location>
</feature>
<proteinExistence type="evidence at protein level"/>
<keyword id="KW-0903">Direct protein sequencing</keyword>
<keyword id="KW-0687">Ribonucleoprotein</keyword>
<keyword id="KW-0689">Ribosomal protein</keyword>
<dbReference type="EMBL" id="X72787">
    <property type="protein sequence ID" value="CAA51301.1"/>
    <property type="molecule type" value="Genomic_DNA"/>
</dbReference>
<dbReference type="PIR" id="S32239">
    <property type="entry name" value="R7SMG"/>
</dbReference>
<dbReference type="RefSeq" id="WP_003966996.1">
    <property type="nucleotide sequence ID" value="NZ_UAVD01000027.1"/>
</dbReference>
<dbReference type="SMR" id="P02396"/>
<dbReference type="STRING" id="1911.GCA_001715295_02332"/>
<dbReference type="OMA" id="LEDKWGV"/>
<dbReference type="OrthoDB" id="9811748at2"/>
<dbReference type="GO" id="GO:0022625">
    <property type="term" value="C:cytosolic large ribosomal subunit"/>
    <property type="evidence" value="ECO:0007669"/>
    <property type="project" value="TreeGrafter"/>
</dbReference>
<dbReference type="GO" id="GO:0003729">
    <property type="term" value="F:mRNA binding"/>
    <property type="evidence" value="ECO:0007669"/>
    <property type="project" value="TreeGrafter"/>
</dbReference>
<dbReference type="GO" id="GO:0003735">
    <property type="term" value="F:structural constituent of ribosome"/>
    <property type="evidence" value="ECO:0007669"/>
    <property type="project" value="InterPro"/>
</dbReference>
<dbReference type="GO" id="GO:0006412">
    <property type="term" value="P:translation"/>
    <property type="evidence" value="ECO:0007669"/>
    <property type="project" value="UniProtKB-UniRule"/>
</dbReference>
<dbReference type="CDD" id="cd00387">
    <property type="entry name" value="Ribosomal_L7_L12"/>
    <property type="match status" value="1"/>
</dbReference>
<dbReference type="FunFam" id="1.20.5.710:FF:000005">
    <property type="entry name" value="50S ribosomal protein L7/L12"/>
    <property type="match status" value="1"/>
</dbReference>
<dbReference type="FunFam" id="3.30.1390.10:FF:000001">
    <property type="entry name" value="50S ribosomal protein L7/L12"/>
    <property type="match status" value="1"/>
</dbReference>
<dbReference type="Gene3D" id="3.30.1390.10">
    <property type="match status" value="1"/>
</dbReference>
<dbReference type="Gene3D" id="1.20.5.710">
    <property type="entry name" value="Single helix bin"/>
    <property type="match status" value="1"/>
</dbReference>
<dbReference type="HAMAP" id="MF_00368">
    <property type="entry name" value="Ribosomal_bL12"/>
    <property type="match status" value="1"/>
</dbReference>
<dbReference type="InterPro" id="IPR000206">
    <property type="entry name" value="Ribosomal_bL12"/>
</dbReference>
<dbReference type="InterPro" id="IPR013823">
    <property type="entry name" value="Ribosomal_bL12_C"/>
</dbReference>
<dbReference type="InterPro" id="IPR014719">
    <property type="entry name" value="Ribosomal_bL12_C/ClpS-like"/>
</dbReference>
<dbReference type="InterPro" id="IPR008932">
    <property type="entry name" value="Ribosomal_bL12_oligo"/>
</dbReference>
<dbReference type="InterPro" id="IPR036235">
    <property type="entry name" value="Ribosomal_bL12_oligo_N_sf"/>
</dbReference>
<dbReference type="NCBIfam" id="TIGR00855">
    <property type="entry name" value="L12"/>
    <property type="match status" value="1"/>
</dbReference>
<dbReference type="PANTHER" id="PTHR45987">
    <property type="entry name" value="39S RIBOSOMAL PROTEIN L12"/>
    <property type="match status" value="1"/>
</dbReference>
<dbReference type="PANTHER" id="PTHR45987:SF4">
    <property type="entry name" value="LARGE RIBOSOMAL SUBUNIT PROTEIN BL12M"/>
    <property type="match status" value="1"/>
</dbReference>
<dbReference type="Pfam" id="PF00542">
    <property type="entry name" value="Ribosomal_L12"/>
    <property type="match status" value="1"/>
</dbReference>
<dbReference type="Pfam" id="PF16320">
    <property type="entry name" value="Ribosomal_L12_N"/>
    <property type="match status" value="1"/>
</dbReference>
<dbReference type="SUPFAM" id="SSF54736">
    <property type="entry name" value="ClpS-like"/>
    <property type="match status" value="1"/>
</dbReference>
<dbReference type="SUPFAM" id="SSF48300">
    <property type="entry name" value="Ribosomal protein L7/12, oligomerisation (N-terminal) domain"/>
    <property type="match status" value="1"/>
</dbReference>
<sequence>MAKLSQDDLLAQFEEMTLIELSEFVKAFEEKFDVTAAAAVAVAGPAAGGAPAEAEAEQDEFDVILTGAGEKKIQVIKVVRELTSLGLKEAKDLVDGTPKPVLEKVAKEAAEKAAESLKAAGASVEVK</sequence>
<evidence type="ECO:0000255" key="1">
    <source>
        <dbReference type="HAMAP-Rule" id="MF_00368"/>
    </source>
</evidence>
<evidence type="ECO:0000269" key="2">
    <source ref="2"/>
</evidence>
<evidence type="ECO:0000305" key="3"/>
<name>RL7_STRGR</name>